<dbReference type="EMBL" id="BC103263">
    <property type="protein sequence ID" value="AAI03264.1"/>
    <property type="molecule type" value="mRNA"/>
</dbReference>
<dbReference type="RefSeq" id="NP_001032716.1">
    <property type="nucleotide sequence ID" value="NM_001037627.2"/>
</dbReference>
<dbReference type="RefSeq" id="XP_005219073.1">
    <property type="nucleotide sequence ID" value="XM_005219016.3"/>
</dbReference>
<dbReference type="FunCoup" id="Q3ZBJ3">
    <property type="interactions" value="518"/>
</dbReference>
<dbReference type="STRING" id="9913.ENSBTAP00000072950"/>
<dbReference type="GlyGen" id="Q3ZBJ3">
    <property type="glycosylation" value="2 sites"/>
</dbReference>
<dbReference type="PaxDb" id="9913-ENSBTAP00000024386"/>
<dbReference type="GeneID" id="616128"/>
<dbReference type="KEGG" id="bta:616128"/>
<dbReference type="CTD" id="53822"/>
<dbReference type="VEuPathDB" id="HostDB:ENSBTAG00000018326"/>
<dbReference type="eggNOG" id="ENOG502SFZR">
    <property type="taxonomic scope" value="Eukaryota"/>
</dbReference>
<dbReference type="HOGENOM" id="CLU_168385_1_0_1"/>
<dbReference type="InParanoid" id="Q3ZBJ3"/>
<dbReference type="OrthoDB" id="8961850at2759"/>
<dbReference type="TreeFam" id="TF333443"/>
<dbReference type="Reactome" id="R-BTA-5578775">
    <property type="pathway name" value="Ion homeostasis"/>
</dbReference>
<dbReference type="Reactome" id="R-BTA-936837">
    <property type="pathway name" value="Ion transport by P-type ATPases"/>
</dbReference>
<dbReference type="Proteomes" id="UP000009136">
    <property type="component" value="Chromosome 18"/>
</dbReference>
<dbReference type="Bgee" id="ENSBTAG00000018326">
    <property type="expression patterns" value="Expressed in floor plate of diencephalon and 99 other cell types or tissues"/>
</dbReference>
<dbReference type="GO" id="GO:0005886">
    <property type="term" value="C:plasma membrane"/>
    <property type="evidence" value="ECO:0007669"/>
    <property type="project" value="UniProtKB-SubCell"/>
</dbReference>
<dbReference type="GO" id="GO:0017080">
    <property type="term" value="F:sodium channel regulator activity"/>
    <property type="evidence" value="ECO:0000318"/>
    <property type="project" value="GO_Central"/>
</dbReference>
<dbReference type="GO" id="GO:0034220">
    <property type="term" value="P:monoatomic ion transmembrane transport"/>
    <property type="evidence" value="ECO:0007669"/>
    <property type="project" value="UniProtKB-KW"/>
</dbReference>
<dbReference type="GO" id="GO:1903278">
    <property type="term" value="P:positive regulation of sodium ion export across plasma membrane"/>
    <property type="evidence" value="ECO:0000318"/>
    <property type="project" value="GO_Central"/>
</dbReference>
<dbReference type="GO" id="GO:0006813">
    <property type="term" value="P:potassium ion transport"/>
    <property type="evidence" value="ECO:0007669"/>
    <property type="project" value="UniProtKB-KW"/>
</dbReference>
<dbReference type="GO" id="GO:0006814">
    <property type="term" value="P:sodium ion transport"/>
    <property type="evidence" value="ECO:0007669"/>
    <property type="project" value="UniProtKB-KW"/>
</dbReference>
<dbReference type="FunFam" id="1.20.5.780:FF:000003">
    <property type="entry name" value="FXYD domain-containing ion transport regulator"/>
    <property type="match status" value="1"/>
</dbReference>
<dbReference type="Gene3D" id="1.20.5.780">
    <property type="entry name" value="Single helix bin"/>
    <property type="match status" value="1"/>
</dbReference>
<dbReference type="InterPro" id="IPR047297">
    <property type="entry name" value="FXYD_motif"/>
</dbReference>
<dbReference type="InterPro" id="IPR000272">
    <property type="entry name" value="Ion-transport_regulator_FXYD"/>
</dbReference>
<dbReference type="PANTHER" id="PTHR14132:SF1">
    <property type="entry name" value="FXYD DOMAIN-CONTAINING ION TRANSPORT REGULATOR 7"/>
    <property type="match status" value="1"/>
</dbReference>
<dbReference type="PANTHER" id="PTHR14132">
    <property type="entry name" value="SODIUM/POTASSIUM-TRANSPORTING ATPASE SUBUNIT GAMMA"/>
    <property type="match status" value="1"/>
</dbReference>
<dbReference type="Pfam" id="PF02038">
    <property type="entry name" value="ATP1G1_PLM_MAT8"/>
    <property type="match status" value="1"/>
</dbReference>
<dbReference type="PROSITE" id="PS01310">
    <property type="entry name" value="FXYD"/>
    <property type="match status" value="1"/>
</dbReference>
<feature type="chain" id="PRO_0000249011" description="FXYD domain-containing ion transport regulator 7">
    <location>
        <begin position="1"/>
        <end position="78"/>
    </location>
</feature>
<feature type="topological domain" description="Extracellular" evidence="3">
    <location>
        <begin position="1"/>
        <end position="22"/>
    </location>
</feature>
<feature type="transmembrane region" description="Helical" evidence="4">
    <location>
        <begin position="23"/>
        <end position="43"/>
    </location>
</feature>
<feature type="topological domain" description="Cytoplasmic" evidence="6">
    <location>
        <begin position="44"/>
        <end position="78"/>
    </location>
</feature>
<feature type="region of interest" description="Disordered" evidence="5">
    <location>
        <begin position="52"/>
        <end position="78"/>
    </location>
</feature>
<feature type="modified residue" description="Phosphoserine" evidence="3">
    <location>
        <position position="71"/>
    </location>
</feature>
<feature type="glycosylation site" description="O-linked (GlcNAc) threonine" evidence="2">
    <location>
        <position position="3"/>
    </location>
</feature>
<feature type="glycosylation site" description="O-linked (GlcNAc) threonine" evidence="2">
    <location>
        <position position="7"/>
    </location>
</feature>
<sequence length="78" mass="8352">MATQVPTKVPQDPDPFYYDYDTVQTVGMTLATILFLLGILIILSKKVKCRKADSRSESPTCKSCKSELPSSAPGGGGV</sequence>
<comment type="function">
    <text evidence="1 2">Associates with and regulates the activity of the sodium/potassium-transporting ATPase (NKA) which catalyzes the hydrolysis of ATP coupled with the exchange of Na(+) and K(+) ions across the plasma membrane (By similarity). Reduces the apparent affinity for external K(+), an effect that depends on the presence of external Na(+) and voltage (By similarity). Increases the apparent affinity for intracellular Na(+) (By similarity).</text>
</comment>
<comment type="subunit">
    <text evidence="2">Regulatory subunit of the sodium/potassium-transporting ATPase which is composed of a catalytic alpha subunit, a non-catalytic beta subunit and an additional regulatory subunit. The regulatory subunit, a member of the FXYD protein family, modulates the enzymatic activity in a tissue- and isoform-specific way by changing affinities of the Na+/K+-ATPase toward Na(+), K(+) or ATP.</text>
</comment>
<comment type="subcellular location">
    <subcellularLocation>
        <location evidence="2">Cell membrane</location>
        <topology evidence="2">Single-pass type I membrane protein</topology>
    </subcellularLocation>
    <text evidence="3">Able to translocate to the plasma membrane independent of its association with NKA (in vitro).</text>
</comment>
<comment type="domain">
    <text evidence="2">The transmembrane domain is important for the interaction with NKA and with the functional effect of FXYD7.</text>
</comment>
<comment type="PTM">
    <text evidence="2">O-glycosylated; required for stabilization and translocation to the plasma membrane.</text>
</comment>
<comment type="similarity">
    <text evidence="6">Belongs to the FXYD family.</text>
</comment>
<name>FXYD7_BOVIN</name>
<accession>Q3ZBJ3</accession>
<reference key="1">
    <citation type="submission" date="2005-08" db="EMBL/GenBank/DDBJ databases">
        <authorList>
            <consortium name="NIH - Mammalian Gene Collection (MGC) project"/>
        </authorList>
    </citation>
    <scope>NUCLEOTIDE SEQUENCE [LARGE SCALE MRNA]</scope>
    <source>
        <strain>Hereford</strain>
        <tissue>Hypothalamus</tissue>
    </source>
</reference>
<evidence type="ECO:0000250" key="1">
    <source>
        <dbReference type="UniProtKB" id="P58549"/>
    </source>
</evidence>
<evidence type="ECO:0000250" key="2">
    <source>
        <dbReference type="UniProtKB" id="P59648"/>
    </source>
</evidence>
<evidence type="ECO:0000250" key="3">
    <source>
        <dbReference type="UniProtKB" id="P59649"/>
    </source>
</evidence>
<evidence type="ECO:0000255" key="4"/>
<evidence type="ECO:0000256" key="5">
    <source>
        <dbReference type="SAM" id="MobiDB-lite"/>
    </source>
</evidence>
<evidence type="ECO:0000305" key="6"/>
<protein>
    <recommendedName>
        <fullName>FXYD domain-containing ion transport regulator 7</fullName>
    </recommendedName>
</protein>
<keyword id="KW-1003">Cell membrane</keyword>
<keyword id="KW-0325">Glycoprotein</keyword>
<keyword id="KW-0407">Ion channel</keyword>
<keyword id="KW-0406">Ion transport</keyword>
<keyword id="KW-0472">Membrane</keyword>
<keyword id="KW-0597">Phosphoprotein</keyword>
<keyword id="KW-0630">Potassium</keyword>
<keyword id="KW-0633">Potassium transport</keyword>
<keyword id="KW-1185">Reference proteome</keyword>
<keyword id="KW-0915">Sodium</keyword>
<keyword id="KW-0739">Sodium transport</keyword>
<keyword id="KW-0740">Sodium/potassium transport</keyword>
<keyword id="KW-0812">Transmembrane</keyword>
<keyword id="KW-1133">Transmembrane helix</keyword>
<keyword id="KW-0813">Transport</keyword>
<organism>
    <name type="scientific">Bos taurus</name>
    <name type="common">Bovine</name>
    <dbReference type="NCBI Taxonomy" id="9913"/>
    <lineage>
        <taxon>Eukaryota</taxon>
        <taxon>Metazoa</taxon>
        <taxon>Chordata</taxon>
        <taxon>Craniata</taxon>
        <taxon>Vertebrata</taxon>
        <taxon>Euteleostomi</taxon>
        <taxon>Mammalia</taxon>
        <taxon>Eutheria</taxon>
        <taxon>Laurasiatheria</taxon>
        <taxon>Artiodactyla</taxon>
        <taxon>Ruminantia</taxon>
        <taxon>Pecora</taxon>
        <taxon>Bovidae</taxon>
        <taxon>Bovinae</taxon>
        <taxon>Bos</taxon>
    </lineage>
</organism>
<proteinExistence type="inferred from homology"/>
<gene>
    <name type="primary">FXYD7</name>
</gene>